<feature type="chain" id="PRO_0000179789" description="Putative N-acetylmannosamine-6-phosphate 2-epimerase">
    <location>
        <begin position="1"/>
        <end position="235"/>
    </location>
</feature>
<proteinExistence type="inferred from homology"/>
<protein>
    <recommendedName>
        <fullName evidence="1">Putative N-acetylmannosamine-6-phosphate 2-epimerase</fullName>
        <ecNumber evidence="1">5.1.3.9</ecNumber>
    </recommendedName>
    <alternativeName>
        <fullName evidence="1">ManNAc-6-P epimerase</fullName>
    </alternativeName>
</protein>
<name>NANE_PHOPR</name>
<dbReference type="EC" id="5.1.3.9" evidence="1"/>
<dbReference type="EMBL" id="CR378670">
    <property type="protein sequence ID" value="CAG20671.1"/>
    <property type="molecule type" value="Genomic_DNA"/>
</dbReference>
<dbReference type="RefSeq" id="WP_011218960.1">
    <property type="nucleotide sequence ID" value="NC_006370.1"/>
</dbReference>
<dbReference type="SMR" id="Q6LPV5"/>
<dbReference type="STRING" id="298386.PBPRA2285"/>
<dbReference type="KEGG" id="ppr:PBPRA2285"/>
<dbReference type="eggNOG" id="COG3010">
    <property type="taxonomic scope" value="Bacteria"/>
</dbReference>
<dbReference type="HOGENOM" id="CLU_086300_0_0_6"/>
<dbReference type="UniPathway" id="UPA00629">
    <property type="reaction ID" value="UER00682"/>
</dbReference>
<dbReference type="Proteomes" id="UP000000593">
    <property type="component" value="Chromosome 1"/>
</dbReference>
<dbReference type="GO" id="GO:0005829">
    <property type="term" value="C:cytosol"/>
    <property type="evidence" value="ECO:0007669"/>
    <property type="project" value="TreeGrafter"/>
</dbReference>
<dbReference type="GO" id="GO:0047465">
    <property type="term" value="F:N-acylglucosamine-6-phosphate 2-epimerase activity"/>
    <property type="evidence" value="ECO:0007669"/>
    <property type="project" value="UniProtKB-EC"/>
</dbReference>
<dbReference type="GO" id="GO:0005975">
    <property type="term" value="P:carbohydrate metabolic process"/>
    <property type="evidence" value="ECO:0007669"/>
    <property type="project" value="UniProtKB-UniRule"/>
</dbReference>
<dbReference type="GO" id="GO:0006053">
    <property type="term" value="P:N-acetylmannosamine catabolic process"/>
    <property type="evidence" value="ECO:0007669"/>
    <property type="project" value="TreeGrafter"/>
</dbReference>
<dbReference type="GO" id="GO:0019262">
    <property type="term" value="P:N-acetylneuraminate catabolic process"/>
    <property type="evidence" value="ECO:0007669"/>
    <property type="project" value="UniProtKB-UniRule"/>
</dbReference>
<dbReference type="CDD" id="cd04729">
    <property type="entry name" value="NanE"/>
    <property type="match status" value="1"/>
</dbReference>
<dbReference type="FunFam" id="3.20.20.70:FF:000035">
    <property type="entry name" value="Putative N-acetylmannosamine-6-phosphate 2-epimerase"/>
    <property type="match status" value="1"/>
</dbReference>
<dbReference type="Gene3D" id="3.20.20.70">
    <property type="entry name" value="Aldolase class I"/>
    <property type="match status" value="1"/>
</dbReference>
<dbReference type="HAMAP" id="MF_01235">
    <property type="entry name" value="ManNAc6P_epimer"/>
    <property type="match status" value="1"/>
</dbReference>
<dbReference type="InterPro" id="IPR013785">
    <property type="entry name" value="Aldolase_TIM"/>
</dbReference>
<dbReference type="InterPro" id="IPR007260">
    <property type="entry name" value="NanE"/>
</dbReference>
<dbReference type="InterPro" id="IPR011060">
    <property type="entry name" value="RibuloseP-bd_barrel"/>
</dbReference>
<dbReference type="NCBIfam" id="NF002231">
    <property type="entry name" value="PRK01130.1"/>
    <property type="match status" value="1"/>
</dbReference>
<dbReference type="PANTHER" id="PTHR36204">
    <property type="entry name" value="N-ACETYLMANNOSAMINE-6-PHOSPHATE 2-EPIMERASE-RELATED"/>
    <property type="match status" value="1"/>
</dbReference>
<dbReference type="PANTHER" id="PTHR36204:SF1">
    <property type="entry name" value="N-ACETYLMANNOSAMINE-6-PHOSPHATE 2-EPIMERASE-RELATED"/>
    <property type="match status" value="1"/>
</dbReference>
<dbReference type="Pfam" id="PF04131">
    <property type="entry name" value="NanE"/>
    <property type="match status" value="1"/>
</dbReference>
<dbReference type="SUPFAM" id="SSF51366">
    <property type="entry name" value="Ribulose-phoshate binding barrel"/>
    <property type="match status" value="1"/>
</dbReference>
<gene>
    <name evidence="1" type="primary">nanE</name>
    <name type="ordered locus">PBPRA2285</name>
</gene>
<organism>
    <name type="scientific">Photobacterium profundum (strain SS9)</name>
    <dbReference type="NCBI Taxonomy" id="298386"/>
    <lineage>
        <taxon>Bacteria</taxon>
        <taxon>Pseudomonadati</taxon>
        <taxon>Pseudomonadota</taxon>
        <taxon>Gammaproteobacteria</taxon>
        <taxon>Vibrionales</taxon>
        <taxon>Vibrionaceae</taxon>
        <taxon>Photobacterium</taxon>
    </lineage>
</organism>
<evidence type="ECO:0000255" key="1">
    <source>
        <dbReference type="HAMAP-Rule" id="MF_01235"/>
    </source>
</evidence>
<reference key="1">
    <citation type="journal article" date="2005" name="Science">
        <title>Life at depth: Photobacterium profundum genome sequence and expression analysis.</title>
        <authorList>
            <person name="Vezzi A."/>
            <person name="Campanaro S."/>
            <person name="D'Angelo M."/>
            <person name="Simonato F."/>
            <person name="Vitulo N."/>
            <person name="Lauro F.M."/>
            <person name="Cestaro A."/>
            <person name="Malacrida G."/>
            <person name="Simionati B."/>
            <person name="Cannata N."/>
            <person name="Romualdi C."/>
            <person name="Bartlett D.H."/>
            <person name="Valle G."/>
        </authorList>
    </citation>
    <scope>NUCLEOTIDE SEQUENCE [LARGE SCALE GENOMIC DNA]</scope>
    <source>
        <strain>ATCC BAA-1253 / SS9</strain>
    </source>
</reference>
<accession>Q6LPV5</accession>
<keyword id="KW-0119">Carbohydrate metabolism</keyword>
<keyword id="KW-0413">Isomerase</keyword>
<keyword id="KW-1185">Reference proteome</keyword>
<sequence>MNKTQENALKALQQGFVASCQPVDDGPMDSPMIVAAMAQAAVAGGVAGIRIEGIENVKAVRPHVNVPIIGIIKRDLEHSDVRITPFIEDVYALKAAGADVIAIDATHRVRPTSVEDLIDAIHSVGCLAMADCSTYDEGMYCQARGVQIIGSTLSGYTGGPVPAEPDFDLITRLKQAGCRVMAEGRFNTPELAGKAIEAGAFCVTVGSAITRVEHICSWFQAEVEHAHQAQSEAVA</sequence>
<comment type="function">
    <text evidence="1">Converts N-acetylmannosamine-6-phosphate (ManNAc-6-P) to N-acetylglucosamine-6-phosphate (GlcNAc-6-P).</text>
</comment>
<comment type="catalytic activity">
    <reaction evidence="1">
        <text>an N-acyl-D-glucosamine 6-phosphate = an N-acyl-D-mannosamine 6-phosphate</text>
        <dbReference type="Rhea" id="RHEA:23932"/>
        <dbReference type="ChEBI" id="CHEBI:57599"/>
        <dbReference type="ChEBI" id="CHEBI:57666"/>
        <dbReference type="EC" id="5.1.3.9"/>
    </reaction>
</comment>
<comment type="pathway">
    <text evidence="1">Amino-sugar metabolism; N-acetylneuraminate degradation; D-fructose 6-phosphate from N-acetylneuraminate: step 3/5.</text>
</comment>
<comment type="similarity">
    <text evidence="1">Belongs to the NanE family.</text>
</comment>